<sequence>MAAGPQSSGAAVSAAAYPDSPVELPARLQKGAMRRRFWGVFNCLCAGAFGALAAAAAKLAFGSQVNIGLCVLGIVAMASANSLMWTFFSRGLSFSMSSAIASVTVTFSNILCSAILGYLLYGECQEILWWGGVFLILCGLTLIHRKFPPTWKESKEQ</sequence>
<comment type="subcellular location">
    <subcellularLocation>
        <location evidence="2">Membrane</location>
        <topology evidence="2">Multi-pass membrane protein</topology>
    </subcellularLocation>
</comment>
<feature type="chain" id="PRO_0000284496" description="Transmembrane protein 42">
    <location>
        <begin position="1"/>
        <end position="157"/>
    </location>
</feature>
<feature type="transmembrane region" description="Helical" evidence="1">
    <location>
        <begin position="37"/>
        <end position="57"/>
    </location>
</feature>
<feature type="transmembrane region" description="Helical" evidence="1">
    <location>
        <begin position="67"/>
        <end position="87"/>
    </location>
</feature>
<feature type="transmembrane region" description="Helical" evidence="1">
    <location>
        <begin position="100"/>
        <end position="120"/>
    </location>
</feature>
<feature type="transmembrane region" description="Helical" evidence="1">
    <location>
        <begin position="124"/>
        <end position="144"/>
    </location>
</feature>
<gene>
    <name type="primary">Tmem42</name>
</gene>
<protein>
    <recommendedName>
        <fullName>Transmembrane protein 42</fullName>
    </recommendedName>
</protein>
<organism>
    <name type="scientific">Mus musculus</name>
    <name type="common">Mouse</name>
    <dbReference type="NCBI Taxonomy" id="10090"/>
    <lineage>
        <taxon>Eukaryota</taxon>
        <taxon>Metazoa</taxon>
        <taxon>Chordata</taxon>
        <taxon>Craniata</taxon>
        <taxon>Vertebrata</taxon>
        <taxon>Euteleostomi</taxon>
        <taxon>Mammalia</taxon>
        <taxon>Eutheria</taxon>
        <taxon>Euarchontoglires</taxon>
        <taxon>Glires</taxon>
        <taxon>Rodentia</taxon>
        <taxon>Myomorpha</taxon>
        <taxon>Muroidea</taxon>
        <taxon>Muridae</taxon>
        <taxon>Murinae</taxon>
        <taxon>Mus</taxon>
        <taxon>Mus</taxon>
    </lineage>
</organism>
<keyword id="KW-0472">Membrane</keyword>
<keyword id="KW-1185">Reference proteome</keyword>
<keyword id="KW-0812">Transmembrane</keyword>
<keyword id="KW-1133">Transmembrane helix</keyword>
<evidence type="ECO:0000255" key="1"/>
<evidence type="ECO:0000305" key="2"/>
<reference key="1">
    <citation type="journal article" date="2005" name="Science">
        <title>The transcriptional landscape of the mammalian genome.</title>
        <authorList>
            <person name="Carninci P."/>
            <person name="Kasukawa T."/>
            <person name="Katayama S."/>
            <person name="Gough J."/>
            <person name="Frith M.C."/>
            <person name="Maeda N."/>
            <person name="Oyama R."/>
            <person name="Ravasi T."/>
            <person name="Lenhard B."/>
            <person name="Wells C."/>
            <person name="Kodzius R."/>
            <person name="Shimokawa K."/>
            <person name="Bajic V.B."/>
            <person name="Brenner S.E."/>
            <person name="Batalov S."/>
            <person name="Forrest A.R."/>
            <person name="Zavolan M."/>
            <person name="Davis M.J."/>
            <person name="Wilming L.G."/>
            <person name="Aidinis V."/>
            <person name="Allen J.E."/>
            <person name="Ambesi-Impiombato A."/>
            <person name="Apweiler R."/>
            <person name="Aturaliya R.N."/>
            <person name="Bailey T.L."/>
            <person name="Bansal M."/>
            <person name="Baxter L."/>
            <person name="Beisel K.W."/>
            <person name="Bersano T."/>
            <person name="Bono H."/>
            <person name="Chalk A.M."/>
            <person name="Chiu K.P."/>
            <person name="Choudhary V."/>
            <person name="Christoffels A."/>
            <person name="Clutterbuck D.R."/>
            <person name="Crowe M.L."/>
            <person name="Dalla E."/>
            <person name="Dalrymple B.P."/>
            <person name="de Bono B."/>
            <person name="Della Gatta G."/>
            <person name="di Bernardo D."/>
            <person name="Down T."/>
            <person name="Engstrom P."/>
            <person name="Fagiolini M."/>
            <person name="Faulkner G."/>
            <person name="Fletcher C.F."/>
            <person name="Fukushima T."/>
            <person name="Furuno M."/>
            <person name="Futaki S."/>
            <person name="Gariboldi M."/>
            <person name="Georgii-Hemming P."/>
            <person name="Gingeras T.R."/>
            <person name="Gojobori T."/>
            <person name="Green R.E."/>
            <person name="Gustincich S."/>
            <person name="Harbers M."/>
            <person name="Hayashi Y."/>
            <person name="Hensch T.K."/>
            <person name="Hirokawa N."/>
            <person name="Hill D."/>
            <person name="Huminiecki L."/>
            <person name="Iacono M."/>
            <person name="Ikeo K."/>
            <person name="Iwama A."/>
            <person name="Ishikawa T."/>
            <person name="Jakt M."/>
            <person name="Kanapin A."/>
            <person name="Katoh M."/>
            <person name="Kawasawa Y."/>
            <person name="Kelso J."/>
            <person name="Kitamura H."/>
            <person name="Kitano H."/>
            <person name="Kollias G."/>
            <person name="Krishnan S.P."/>
            <person name="Kruger A."/>
            <person name="Kummerfeld S.K."/>
            <person name="Kurochkin I.V."/>
            <person name="Lareau L.F."/>
            <person name="Lazarevic D."/>
            <person name="Lipovich L."/>
            <person name="Liu J."/>
            <person name="Liuni S."/>
            <person name="McWilliam S."/>
            <person name="Madan Babu M."/>
            <person name="Madera M."/>
            <person name="Marchionni L."/>
            <person name="Matsuda H."/>
            <person name="Matsuzawa S."/>
            <person name="Miki H."/>
            <person name="Mignone F."/>
            <person name="Miyake S."/>
            <person name="Morris K."/>
            <person name="Mottagui-Tabar S."/>
            <person name="Mulder N."/>
            <person name="Nakano N."/>
            <person name="Nakauchi H."/>
            <person name="Ng P."/>
            <person name="Nilsson R."/>
            <person name="Nishiguchi S."/>
            <person name="Nishikawa S."/>
            <person name="Nori F."/>
            <person name="Ohara O."/>
            <person name="Okazaki Y."/>
            <person name="Orlando V."/>
            <person name="Pang K.C."/>
            <person name="Pavan W.J."/>
            <person name="Pavesi G."/>
            <person name="Pesole G."/>
            <person name="Petrovsky N."/>
            <person name="Piazza S."/>
            <person name="Reed J."/>
            <person name="Reid J.F."/>
            <person name="Ring B.Z."/>
            <person name="Ringwald M."/>
            <person name="Rost B."/>
            <person name="Ruan Y."/>
            <person name="Salzberg S.L."/>
            <person name="Sandelin A."/>
            <person name="Schneider C."/>
            <person name="Schoenbach C."/>
            <person name="Sekiguchi K."/>
            <person name="Semple C.A."/>
            <person name="Seno S."/>
            <person name="Sessa L."/>
            <person name="Sheng Y."/>
            <person name="Shibata Y."/>
            <person name="Shimada H."/>
            <person name="Shimada K."/>
            <person name="Silva D."/>
            <person name="Sinclair B."/>
            <person name="Sperling S."/>
            <person name="Stupka E."/>
            <person name="Sugiura K."/>
            <person name="Sultana R."/>
            <person name="Takenaka Y."/>
            <person name="Taki K."/>
            <person name="Tammoja K."/>
            <person name="Tan S.L."/>
            <person name="Tang S."/>
            <person name="Taylor M.S."/>
            <person name="Tegner J."/>
            <person name="Teichmann S.A."/>
            <person name="Ueda H.R."/>
            <person name="van Nimwegen E."/>
            <person name="Verardo R."/>
            <person name="Wei C.L."/>
            <person name="Yagi K."/>
            <person name="Yamanishi H."/>
            <person name="Zabarovsky E."/>
            <person name="Zhu S."/>
            <person name="Zimmer A."/>
            <person name="Hide W."/>
            <person name="Bult C."/>
            <person name="Grimmond S.M."/>
            <person name="Teasdale R.D."/>
            <person name="Liu E.T."/>
            <person name="Brusic V."/>
            <person name="Quackenbush J."/>
            <person name="Wahlestedt C."/>
            <person name="Mattick J.S."/>
            <person name="Hume D.A."/>
            <person name="Kai C."/>
            <person name="Sasaki D."/>
            <person name="Tomaru Y."/>
            <person name="Fukuda S."/>
            <person name="Kanamori-Katayama M."/>
            <person name="Suzuki M."/>
            <person name="Aoki J."/>
            <person name="Arakawa T."/>
            <person name="Iida J."/>
            <person name="Imamura K."/>
            <person name="Itoh M."/>
            <person name="Kato T."/>
            <person name="Kawaji H."/>
            <person name="Kawagashira N."/>
            <person name="Kawashima T."/>
            <person name="Kojima M."/>
            <person name="Kondo S."/>
            <person name="Konno H."/>
            <person name="Nakano K."/>
            <person name="Ninomiya N."/>
            <person name="Nishio T."/>
            <person name="Okada M."/>
            <person name="Plessy C."/>
            <person name="Shibata K."/>
            <person name="Shiraki T."/>
            <person name="Suzuki S."/>
            <person name="Tagami M."/>
            <person name="Waki K."/>
            <person name="Watahiki A."/>
            <person name="Okamura-Oho Y."/>
            <person name="Suzuki H."/>
            <person name="Kawai J."/>
            <person name="Hayashizaki Y."/>
        </authorList>
    </citation>
    <scope>NUCLEOTIDE SEQUENCE [LARGE SCALE MRNA]</scope>
    <source>
        <strain>C57BL/6J</strain>
        <tissue>Kidney</tissue>
    </source>
</reference>
<reference key="2">
    <citation type="journal article" date="2004" name="Genome Res.">
        <title>The status, quality, and expansion of the NIH full-length cDNA project: the Mammalian Gene Collection (MGC).</title>
        <authorList>
            <consortium name="The MGC Project Team"/>
        </authorList>
    </citation>
    <scope>NUCLEOTIDE SEQUENCE [LARGE SCALE MRNA]</scope>
    <source>
        <tissue>Testis</tissue>
    </source>
</reference>
<dbReference type="EMBL" id="AK002688">
    <property type="protein sequence ID" value="BAB22284.1"/>
    <property type="molecule type" value="mRNA"/>
</dbReference>
<dbReference type="EMBL" id="AK012820">
    <property type="protein sequence ID" value="BAB28493.1"/>
    <property type="molecule type" value="mRNA"/>
</dbReference>
<dbReference type="EMBL" id="BC049583">
    <property type="protein sequence ID" value="AAH49583.1"/>
    <property type="molecule type" value="mRNA"/>
</dbReference>
<dbReference type="CCDS" id="CCDS23652.1"/>
<dbReference type="RefSeq" id="NP_001158295.1">
    <property type="nucleotide sequence ID" value="NM_001164823.1"/>
</dbReference>
<dbReference type="RefSeq" id="NP_079615.1">
    <property type="nucleotide sequence ID" value="NM_025339.4"/>
</dbReference>
<dbReference type="RefSeq" id="XP_006512268.1">
    <property type="nucleotide sequence ID" value="XM_006512205.3"/>
</dbReference>
<dbReference type="RefSeq" id="XP_006512269.1">
    <property type="nucleotide sequence ID" value="XM_006512206.4"/>
</dbReference>
<dbReference type="FunCoup" id="Q9CR22">
    <property type="interactions" value="28"/>
</dbReference>
<dbReference type="STRING" id="10090.ENSMUSP00000081784"/>
<dbReference type="iPTMnet" id="Q9CR22"/>
<dbReference type="PhosphoSitePlus" id="Q9CR22"/>
<dbReference type="PaxDb" id="10090-ENSMUSP00000081784"/>
<dbReference type="ProteomicsDB" id="259034"/>
<dbReference type="Pumba" id="Q9CR22"/>
<dbReference type="Antibodypedia" id="29508">
    <property type="antibodies" value="29 antibodies from 12 providers"/>
</dbReference>
<dbReference type="DNASU" id="66079"/>
<dbReference type="Ensembl" id="ENSMUST00000084733.7">
    <property type="protein sequence ID" value="ENSMUSP00000081784.6"/>
    <property type="gene ID" value="ENSMUSG00000066233.7"/>
</dbReference>
<dbReference type="GeneID" id="66079"/>
<dbReference type="KEGG" id="mmu:66079"/>
<dbReference type="UCSC" id="uc009sfn.2">
    <property type="organism name" value="mouse"/>
</dbReference>
<dbReference type="AGR" id="MGI:1277176"/>
<dbReference type="CTD" id="131616"/>
<dbReference type="MGI" id="MGI:1277176">
    <property type="gene designation" value="Tmem42"/>
</dbReference>
<dbReference type="VEuPathDB" id="HostDB:ENSMUSG00000066233"/>
<dbReference type="eggNOG" id="ENOG502RY7R">
    <property type="taxonomic scope" value="Eukaryota"/>
</dbReference>
<dbReference type="GeneTree" id="ENSGT00390000012690"/>
<dbReference type="HOGENOM" id="CLU_076687_2_0_1"/>
<dbReference type="InParanoid" id="Q9CR22"/>
<dbReference type="OMA" id="QIALWWV"/>
<dbReference type="OrthoDB" id="5854584at2759"/>
<dbReference type="PhylomeDB" id="Q9CR22"/>
<dbReference type="TreeFam" id="TF336306"/>
<dbReference type="BioGRID-ORCS" id="66079">
    <property type="hits" value="2 hits in 75 CRISPR screens"/>
</dbReference>
<dbReference type="ChiTaRS" id="Tmem42">
    <property type="organism name" value="mouse"/>
</dbReference>
<dbReference type="PRO" id="PR:Q9CR22"/>
<dbReference type="Proteomes" id="UP000000589">
    <property type="component" value="Chromosome 9"/>
</dbReference>
<dbReference type="RNAct" id="Q9CR22">
    <property type="molecule type" value="protein"/>
</dbReference>
<dbReference type="Bgee" id="ENSMUSG00000066233">
    <property type="expression patterns" value="Expressed in interventricular septum and 247 other cell types or tissues"/>
</dbReference>
<dbReference type="ExpressionAtlas" id="Q9CR22">
    <property type="expression patterns" value="baseline and differential"/>
</dbReference>
<dbReference type="GO" id="GO:0016020">
    <property type="term" value="C:membrane"/>
    <property type="evidence" value="ECO:0007669"/>
    <property type="project" value="UniProtKB-SubCell"/>
</dbReference>
<dbReference type="InterPro" id="IPR039632">
    <property type="entry name" value="TMEM42"/>
</dbReference>
<dbReference type="PANTHER" id="PTHR31965">
    <property type="entry name" value="TRANSMEMBRANE PROTEIN 42"/>
    <property type="match status" value="1"/>
</dbReference>
<dbReference type="PANTHER" id="PTHR31965:SF1">
    <property type="entry name" value="TRANSMEMBRANE PROTEIN 42"/>
    <property type="match status" value="1"/>
</dbReference>
<dbReference type="SUPFAM" id="SSF103481">
    <property type="entry name" value="Multidrug resistance efflux transporter EmrE"/>
    <property type="match status" value="1"/>
</dbReference>
<name>TMM42_MOUSE</name>
<proteinExistence type="evidence at transcript level"/>
<accession>Q9CR22</accession>